<protein>
    <recommendedName>
        <fullName>UDP-galactose translocator 1</fullName>
    </recommendedName>
</protein>
<evidence type="ECO:0000255" key="1"/>
<evidence type="ECO:0000256" key="2">
    <source>
        <dbReference type="SAM" id="MobiDB-lite"/>
    </source>
</evidence>
<evidence type="ECO:0000269" key="3">
    <source>
    </source>
</evidence>
<evidence type="ECO:0000305" key="4"/>
<proteinExistence type="inferred from homology"/>
<gene>
    <name type="primary">ugtp-1</name>
    <name type="ORF">ZK370.7/ZK370.9</name>
</gene>
<sequence length="355" mass="39893">MKFQNVHISHQDEDKEKLLPNDKDVEKADESPSSSRPSFVFKCYVIASMTFIWTAYTLTIKYTRSTVNPDMMYSSTSVVLCAEILKLVITFAMFYKECNFDSRQFSEQVSKYYINAPRELAKMSVPSFAYALQNNLDFVGLSNLDAGLYQVTTQLKVVSTAFFMMLFLGRKFSTRRWMAITLLMFGVAFVQMNNVSASEANTKRETAENYIVGLSAVLATCVTAGFAGVYFEKMLKDGGSTPFWIRNMQMYSCGVISASIACLTDFSRISDKGFFFGYTDKVWAVVILLGVGGLYISLVMRYLDNLYKSMASAVSIILVVVLSMLIFPDIFIGMYFVLGTICVVLAVLLYNSVNE</sequence>
<accession>Q02334</accession>
<accession>P34632</accession>
<reference key="1">
    <citation type="journal article" date="1994" name="Nature">
        <title>2.2 Mb of contiguous nucleotide sequence from chromosome III of C. elegans.</title>
        <authorList>
            <person name="Wilson R."/>
            <person name="Ainscough R."/>
            <person name="Anderson K."/>
            <person name="Baynes C."/>
            <person name="Berks M."/>
            <person name="Bonfield J."/>
            <person name="Burton J."/>
            <person name="Connell M."/>
            <person name="Copsey T."/>
            <person name="Cooper J."/>
            <person name="Coulson A."/>
            <person name="Craxton M."/>
            <person name="Dear S."/>
            <person name="Du Z."/>
            <person name="Durbin R."/>
            <person name="Favello A."/>
            <person name="Fraser A."/>
            <person name="Fulton L."/>
            <person name="Gardner A."/>
            <person name="Green P."/>
            <person name="Hawkins T."/>
            <person name="Hillier L."/>
            <person name="Jier M."/>
            <person name="Johnston L."/>
            <person name="Jones M."/>
            <person name="Kershaw J."/>
            <person name="Kirsten J."/>
            <person name="Laisster N."/>
            <person name="Latreille P."/>
            <person name="Lightning J."/>
            <person name="Lloyd C."/>
            <person name="Mortimore B."/>
            <person name="O'Callaghan M."/>
            <person name="Parsons J."/>
            <person name="Percy C."/>
            <person name="Rifken L."/>
            <person name="Roopra A."/>
            <person name="Saunders D."/>
            <person name="Shownkeen R."/>
            <person name="Sims M."/>
            <person name="Smaldon N."/>
            <person name="Smith A."/>
            <person name="Smith M."/>
            <person name="Sonnhammer E."/>
            <person name="Staden R."/>
            <person name="Sulston J."/>
            <person name="Thierry-Mieg J."/>
            <person name="Thomas K."/>
            <person name="Vaudin M."/>
            <person name="Vaughan K."/>
            <person name="Waterston R."/>
            <person name="Watson A."/>
            <person name="Weinstock L."/>
            <person name="Wilkinson-Sproat J."/>
            <person name="Wohldman P."/>
        </authorList>
    </citation>
    <scope>NUCLEOTIDE SEQUENCE [LARGE SCALE GENOMIC DNA]</scope>
    <source>
        <strain>Bristol N2</strain>
    </source>
</reference>
<reference key="2">
    <citation type="journal article" date="1998" name="Science">
        <title>Genome sequence of the nematode C. elegans: a platform for investigating biology.</title>
        <authorList>
            <consortium name="The C. elegans sequencing consortium"/>
        </authorList>
    </citation>
    <scope>NUCLEOTIDE SEQUENCE [LARGE SCALE GENOMIC DNA]</scope>
    <source>
        <strain>Bristol N2</strain>
    </source>
</reference>
<reference key="3">
    <citation type="journal article" date="2007" name="Development">
        <title>Cortical granule exocytosis in C. elegans is regulated by cell cycle components including separase.</title>
        <authorList>
            <person name="Bembenek J.N."/>
            <person name="Richie C.T."/>
            <person name="Squirrell J.M."/>
            <person name="Campbell J.M."/>
            <person name="Eliceiri K.W."/>
            <person name="Poteryaev D."/>
            <person name="Spang A."/>
            <person name="Golden A."/>
            <person name="White J.G."/>
        </authorList>
    </citation>
    <scope>SUBCELLULAR LOCATION</scope>
</reference>
<feature type="chain" id="PRO_0000213364" description="UDP-galactose translocator 1">
    <location>
        <begin position="1"/>
        <end position="355"/>
    </location>
</feature>
<feature type="transmembrane region" description="Helical" evidence="1">
    <location>
        <begin position="40"/>
        <end position="60"/>
    </location>
</feature>
<feature type="transmembrane region" description="Helical" evidence="1">
    <location>
        <begin position="177"/>
        <end position="197"/>
    </location>
</feature>
<feature type="transmembrane region" description="Helical" evidence="1">
    <location>
        <begin position="211"/>
        <end position="231"/>
    </location>
</feature>
<feature type="transmembrane region" description="Helical" evidence="1">
    <location>
        <begin position="282"/>
        <end position="302"/>
    </location>
</feature>
<feature type="transmembrane region" description="Helical" evidence="1">
    <location>
        <begin position="309"/>
        <end position="329"/>
    </location>
</feature>
<feature type="transmembrane region" description="Helical" evidence="1">
    <location>
        <begin position="330"/>
        <end position="350"/>
    </location>
</feature>
<feature type="region of interest" description="Disordered" evidence="2">
    <location>
        <begin position="1"/>
        <end position="36"/>
    </location>
</feature>
<feature type="compositionally biased region" description="Basic and acidic residues" evidence="2">
    <location>
        <begin position="9"/>
        <end position="30"/>
    </location>
</feature>
<organism>
    <name type="scientific">Caenorhabditis elegans</name>
    <dbReference type="NCBI Taxonomy" id="6239"/>
    <lineage>
        <taxon>Eukaryota</taxon>
        <taxon>Metazoa</taxon>
        <taxon>Ecdysozoa</taxon>
        <taxon>Nematoda</taxon>
        <taxon>Chromadorea</taxon>
        <taxon>Rhabditida</taxon>
        <taxon>Rhabditina</taxon>
        <taxon>Rhabditomorpha</taxon>
        <taxon>Rhabditoidea</taxon>
        <taxon>Rhabditidae</taxon>
        <taxon>Peloderinae</taxon>
        <taxon>Caenorhabditis</taxon>
    </lineage>
</organism>
<name>UGTP1_CAEEL</name>
<comment type="subcellular location">
    <subcellularLocation>
        <location evidence="4">Membrane</location>
        <topology evidence="4">Multi-pass membrane protein</topology>
    </subcellularLocation>
    <subcellularLocation>
        <location evidence="3">Cytoplasmic granule membrane</location>
    </subcellularLocation>
    <text evidence="3">Localizes to cortical granules during meiotic prometaphase I and metaphase I.</text>
</comment>
<comment type="similarity">
    <text evidence="4">Belongs to the nucleotide-sugar transporter family. SLC35A subfamily.</text>
</comment>
<dbReference type="EMBL" id="FO080164">
    <property type="protein sequence ID" value="CCD61726.1"/>
    <property type="molecule type" value="Genomic_DNA"/>
</dbReference>
<dbReference type="PIR" id="S44668">
    <property type="entry name" value="S44668"/>
</dbReference>
<dbReference type="RefSeq" id="NP_498930.1">
    <property type="nucleotide sequence ID" value="NM_066529.8"/>
</dbReference>
<dbReference type="SMR" id="Q02334"/>
<dbReference type="BioGRID" id="41430">
    <property type="interactions" value="1"/>
</dbReference>
<dbReference type="FunCoup" id="Q02334">
    <property type="interactions" value="1103"/>
</dbReference>
<dbReference type="STRING" id="6239.ZK370.7.1"/>
<dbReference type="PaxDb" id="6239-ZK370.7"/>
<dbReference type="PeptideAtlas" id="Q02334"/>
<dbReference type="EnsemblMetazoa" id="ZK370.7.1">
    <property type="protein sequence ID" value="ZK370.7.1"/>
    <property type="gene ID" value="WBGene00022721"/>
</dbReference>
<dbReference type="EnsemblMetazoa" id="ZK370.7.2">
    <property type="protein sequence ID" value="ZK370.7.2"/>
    <property type="gene ID" value="WBGene00022721"/>
</dbReference>
<dbReference type="GeneID" id="176227"/>
<dbReference type="KEGG" id="cel:CELE_ZK370.7"/>
<dbReference type="AGR" id="WB:WBGene00022721"/>
<dbReference type="CTD" id="176227"/>
<dbReference type="WormBase" id="ZK370.7">
    <property type="protein sequence ID" value="CE29642"/>
    <property type="gene ID" value="WBGene00022721"/>
    <property type="gene designation" value="ugtp-1"/>
</dbReference>
<dbReference type="eggNOG" id="KOG2234">
    <property type="taxonomic scope" value="Eukaryota"/>
</dbReference>
<dbReference type="GeneTree" id="ENSGT00950000182827"/>
<dbReference type="HOGENOM" id="CLU_024645_1_0_1"/>
<dbReference type="InParanoid" id="Q02334"/>
<dbReference type="OMA" id="KCYVIAS"/>
<dbReference type="OrthoDB" id="408493at2759"/>
<dbReference type="PhylomeDB" id="Q02334"/>
<dbReference type="Reactome" id="R-CEL-4085001">
    <property type="pathway name" value="Sialic acid metabolism"/>
</dbReference>
<dbReference type="Reactome" id="R-CEL-727802">
    <property type="pathway name" value="Transport of nucleotide sugars"/>
</dbReference>
<dbReference type="PRO" id="PR:Q02334"/>
<dbReference type="Proteomes" id="UP000001940">
    <property type="component" value="Chromosome III"/>
</dbReference>
<dbReference type="Bgee" id="WBGene00022721">
    <property type="expression patterns" value="Expressed in germ line (C elegans) and 4 other cell types or tissues"/>
</dbReference>
<dbReference type="GO" id="GO:0060473">
    <property type="term" value="C:cortical granule"/>
    <property type="evidence" value="ECO:0000314"/>
    <property type="project" value="WormBase"/>
</dbReference>
<dbReference type="GO" id="GO:0005797">
    <property type="term" value="C:Golgi medial cisterna"/>
    <property type="evidence" value="ECO:0000314"/>
    <property type="project" value="WormBase"/>
</dbReference>
<dbReference type="GO" id="GO:0000139">
    <property type="term" value="C:Golgi membrane"/>
    <property type="evidence" value="ECO:0000318"/>
    <property type="project" value="GO_Central"/>
</dbReference>
<dbReference type="GO" id="GO:0005456">
    <property type="term" value="F:CMP-N-acetylneuraminate transmembrane transporter activity"/>
    <property type="evidence" value="ECO:0000318"/>
    <property type="project" value="GO_Central"/>
</dbReference>
<dbReference type="GO" id="GO:0015782">
    <property type="term" value="P:CMP-N-acetylneuraminate transmembrane transport"/>
    <property type="evidence" value="ECO:0000318"/>
    <property type="project" value="GO_Central"/>
</dbReference>
<dbReference type="InterPro" id="IPR007271">
    <property type="entry name" value="Nuc_sug_transpt"/>
</dbReference>
<dbReference type="NCBIfam" id="TIGR00803">
    <property type="entry name" value="nst"/>
    <property type="match status" value="1"/>
</dbReference>
<dbReference type="PANTHER" id="PTHR10231">
    <property type="entry name" value="NUCLEOTIDE-SUGAR TRANSMEMBRANE TRANSPORTER"/>
    <property type="match status" value="1"/>
</dbReference>
<dbReference type="Pfam" id="PF04142">
    <property type="entry name" value="Nuc_sug_transp"/>
    <property type="match status" value="1"/>
</dbReference>
<dbReference type="PIRSF" id="PIRSF005799">
    <property type="entry name" value="UDP-gal_transpt"/>
    <property type="match status" value="1"/>
</dbReference>
<dbReference type="SUPFAM" id="SSF103481">
    <property type="entry name" value="Multidrug resistance efflux transporter EmrE"/>
    <property type="match status" value="1"/>
</dbReference>
<keyword id="KW-0472">Membrane</keyword>
<keyword id="KW-1185">Reference proteome</keyword>
<keyword id="KW-0762">Sugar transport</keyword>
<keyword id="KW-0812">Transmembrane</keyword>
<keyword id="KW-1133">Transmembrane helix</keyword>
<keyword id="KW-0813">Transport</keyword>